<comment type="similarity">
    <text evidence="2">Belongs to the IIV-6 391R family.</text>
</comment>
<gene>
    <name type="ORF">IIV6-391R</name>
</gene>
<sequence>MFIVKNLNFNFLNVISNFLPNKMLENVFIELYERGILLFLDVDSYCKNSDDADLNILKGRKEFLKYFDEPLEKGYVFTFNTDIHKLYKEIEEESCAVISYGYESDTDDKADDVGRNFVEILNKNGYITDWTEEVKDSKTIKIVIDENDIPNFKLNESPYLLNLTNDDLFENKNPLIQLIEDEPFPTTKNHNNDKRETNDKDDQQLKLNKMKEIEEKTIAFIDKNSLTKSQIEEYCTQQIINLDAIDTTDEIVKCRRKETIQNLQQVSLPTLKCSKCLKLYKQKKSYEKHIEKCN</sequence>
<keyword id="KW-1185">Reference proteome</keyword>
<proteinExistence type="inferred from homology"/>
<accession>Q91FD3</accession>
<dbReference type="EMBL" id="AF303741">
    <property type="protein sequence ID" value="AAK82251.1"/>
    <property type="molecule type" value="Genomic_DNA"/>
</dbReference>
<dbReference type="RefSeq" id="NP_149854.1">
    <property type="nucleotide sequence ID" value="NC_003038.1"/>
</dbReference>
<dbReference type="SMR" id="Q91FD3"/>
<dbReference type="KEGG" id="vg:1733318"/>
<dbReference type="OrthoDB" id="16940at10239"/>
<dbReference type="Proteomes" id="UP000001359">
    <property type="component" value="Genome"/>
</dbReference>
<dbReference type="GO" id="GO:0051087">
    <property type="term" value="F:protein-folding chaperone binding"/>
    <property type="evidence" value="ECO:0007669"/>
    <property type="project" value="InterPro"/>
</dbReference>
<dbReference type="Gene3D" id="1.20.58.120">
    <property type="entry name" value="BAG domain"/>
    <property type="match status" value="1"/>
</dbReference>
<dbReference type="InterPro" id="IPR036533">
    <property type="entry name" value="BAG_dom_sf"/>
</dbReference>
<dbReference type="InterPro" id="IPR003103">
    <property type="entry name" value="BAG_domain"/>
</dbReference>
<dbReference type="Pfam" id="PF02179">
    <property type="entry name" value="BAG"/>
    <property type="match status" value="1"/>
</dbReference>
<dbReference type="SUPFAM" id="SSF63491">
    <property type="entry name" value="BAG domain"/>
    <property type="match status" value="1"/>
</dbReference>
<organismHost>
    <name type="scientific">Acheta domesticus</name>
    <name type="common">House cricket</name>
    <dbReference type="NCBI Taxonomy" id="6997"/>
</organismHost>
<organismHost>
    <name type="scientific">Chilo suppressalis</name>
    <name type="common">Asiatic rice borer moth</name>
    <dbReference type="NCBI Taxonomy" id="168631"/>
</organismHost>
<organismHost>
    <name type="scientific">Gryllus bimaculatus</name>
    <name type="common">Two-spotted cricket</name>
    <dbReference type="NCBI Taxonomy" id="6999"/>
</organismHost>
<organismHost>
    <name type="scientific">Gryllus campestris</name>
    <dbReference type="NCBI Taxonomy" id="58607"/>
</organismHost>
<organismHost>
    <name type="scientific">Spodoptera frugiperda</name>
    <name type="common">Fall armyworm</name>
    <dbReference type="NCBI Taxonomy" id="7108"/>
</organismHost>
<evidence type="ECO:0000256" key="1">
    <source>
        <dbReference type="SAM" id="MobiDB-lite"/>
    </source>
</evidence>
<evidence type="ECO:0000305" key="2"/>
<feature type="chain" id="PRO_0000377879" description="Uncharacterized protein 391R">
    <location>
        <begin position="1"/>
        <end position="294"/>
    </location>
</feature>
<feature type="region of interest" description="Disordered" evidence="1">
    <location>
        <begin position="181"/>
        <end position="204"/>
    </location>
</feature>
<feature type="compositionally biased region" description="Basic and acidic residues" evidence="1">
    <location>
        <begin position="190"/>
        <end position="204"/>
    </location>
</feature>
<reference key="1">
    <citation type="journal article" date="2001" name="Virology">
        <title>Analysis of the first complete DNA sequence of an invertebrate iridovirus: coding strategy of the genome of Chilo iridescent virus.</title>
        <authorList>
            <person name="Jakob N.J."/>
            <person name="Mueller K."/>
            <person name="Bahr U."/>
            <person name="Darai G."/>
        </authorList>
    </citation>
    <scope>NUCLEOTIDE SEQUENCE [LARGE SCALE GENOMIC DNA]</scope>
</reference>
<reference key="2">
    <citation type="journal article" date="2007" name="Virol. J.">
        <title>Comparative genomic analysis of the family Iridoviridae: re-annotating and defining the core set of iridovirus genes.</title>
        <authorList>
            <person name="Eaton H.E."/>
            <person name="Metcalf J."/>
            <person name="Penny E."/>
            <person name="Tcherepanov V."/>
            <person name="Upton C."/>
            <person name="Brunetti C.R."/>
        </authorList>
    </citation>
    <scope>GENOME REANNOTATION</scope>
</reference>
<name>VF391_IIV6</name>
<protein>
    <recommendedName>
        <fullName>Uncharacterized protein 391R</fullName>
    </recommendedName>
</protein>
<organism>
    <name type="scientific">Invertebrate iridescent virus 6</name>
    <name type="common">IIV-6</name>
    <name type="synonym">Chilo iridescent virus</name>
    <dbReference type="NCBI Taxonomy" id="176652"/>
    <lineage>
        <taxon>Viruses</taxon>
        <taxon>Varidnaviria</taxon>
        <taxon>Bamfordvirae</taxon>
        <taxon>Nucleocytoviricota</taxon>
        <taxon>Megaviricetes</taxon>
        <taxon>Pimascovirales</taxon>
        <taxon>Iridoviridae</taxon>
        <taxon>Betairidovirinae</taxon>
        <taxon>Iridovirus</taxon>
    </lineage>
</organism>